<sequence length="355" mass="40512">MSTEDAALTGIAVTAELKKKCAFSSWYEAFKGHTPRAEVIRPLPEEFVSYVDQRGIRLAREEGSKYFYGQELEPTTDGEYSDWEGGDSASERSFVPLDPVADFPEVHARVKQAIARFGAVAPKLNRSAPKDAMWRLRNYSMKCNEANDVYLLLNGSSHVACDVSDTLLDWLASTEDEPVMELVLREWLDVNPALEFRVFVRGGEVLGACQRDLNYYDYLKPLEEKLRTAIEDFVHDVMLQRLPDDTFVADVYIPRPFTKVWLIDVNPFARETDPLLFSWNELCTLKPNAEGQPELRLVAENYIGRFAENNIGRFAAKEHSEHQVPLDVVEAGLNPQSMQKLVETWRDLLKIQEEE</sequence>
<accession>Q75A37</accession>
<feature type="chain" id="PRO_0000227683" description="Cell division cycle protein 123">
    <location>
        <begin position="1"/>
        <end position="355"/>
    </location>
</feature>
<protein>
    <recommendedName>
        <fullName>Cell division cycle protein 123</fullName>
    </recommendedName>
</protein>
<comment type="function">
    <text evidence="1">Regulates the cell cycle in a nutrient dependent manner.</text>
</comment>
<comment type="subcellular location">
    <subcellularLocation>
        <location evidence="1">Cytoplasm</location>
    </subcellularLocation>
</comment>
<comment type="similarity">
    <text evidence="2">Belongs to the CDC123 family.</text>
</comment>
<name>CD123_EREGS</name>
<proteinExistence type="inferred from homology"/>
<organism>
    <name type="scientific">Eremothecium gossypii (strain ATCC 10895 / CBS 109.51 / FGSC 9923 / NRRL Y-1056)</name>
    <name type="common">Yeast</name>
    <name type="synonym">Ashbya gossypii</name>
    <dbReference type="NCBI Taxonomy" id="284811"/>
    <lineage>
        <taxon>Eukaryota</taxon>
        <taxon>Fungi</taxon>
        <taxon>Dikarya</taxon>
        <taxon>Ascomycota</taxon>
        <taxon>Saccharomycotina</taxon>
        <taxon>Saccharomycetes</taxon>
        <taxon>Saccharomycetales</taxon>
        <taxon>Saccharomycetaceae</taxon>
        <taxon>Eremothecium</taxon>
    </lineage>
</organism>
<reference key="1">
    <citation type="journal article" date="2004" name="Science">
        <title>The Ashbya gossypii genome as a tool for mapping the ancient Saccharomyces cerevisiae genome.</title>
        <authorList>
            <person name="Dietrich F.S."/>
            <person name="Voegeli S."/>
            <person name="Brachat S."/>
            <person name="Lerch A."/>
            <person name="Gates K."/>
            <person name="Steiner S."/>
            <person name="Mohr C."/>
            <person name="Poehlmann R."/>
            <person name="Luedi P."/>
            <person name="Choi S."/>
            <person name="Wing R.A."/>
            <person name="Flavier A."/>
            <person name="Gaffney T.D."/>
            <person name="Philippsen P."/>
        </authorList>
    </citation>
    <scope>NUCLEOTIDE SEQUENCE [LARGE SCALE GENOMIC DNA]</scope>
    <source>
        <strain>ATCC 10895 / CBS 109.51 / FGSC 9923 / NRRL Y-1056</strain>
    </source>
</reference>
<reference key="2">
    <citation type="journal article" date="2013" name="G3 (Bethesda)">
        <title>Genomes of Ashbya fungi isolated from insects reveal four mating-type loci, numerous translocations, lack of transposons, and distinct gene duplications.</title>
        <authorList>
            <person name="Dietrich F.S."/>
            <person name="Voegeli S."/>
            <person name="Kuo S."/>
            <person name="Philippsen P."/>
        </authorList>
    </citation>
    <scope>GENOME REANNOTATION</scope>
    <source>
        <strain>ATCC 10895 / CBS 109.51 / FGSC 9923 / NRRL Y-1056</strain>
    </source>
</reference>
<gene>
    <name type="primary">CDC123</name>
    <name type="ordered locus">ADR082C</name>
</gene>
<evidence type="ECO:0000250" key="1"/>
<evidence type="ECO:0000305" key="2"/>
<dbReference type="EMBL" id="AE016817">
    <property type="protein sequence ID" value="AAS52002.1"/>
    <property type="molecule type" value="Genomic_DNA"/>
</dbReference>
<dbReference type="RefSeq" id="NP_984178.1">
    <property type="nucleotide sequence ID" value="NM_209531.1"/>
</dbReference>
<dbReference type="SMR" id="Q75A37"/>
<dbReference type="FunCoup" id="Q75A37">
    <property type="interactions" value="787"/>
</dbReference>
<dbReference type="STRING" id="284811.Q75A37"/>
<dbReference type="EnsemblFungi" id="AAS52002">
    <property type="protein sequence ID" value="AAS52002"/>
    <property type="gene ID" value="AGOS_ADR082C"/>
</dbReference>
<dbReference type="GeneID" id="4620327"/>
<dbReference type="KEGG" id="ago:AGOS_ADR082C"/>
<dbReference type="eggNOG" id="KOG2983">
    <property type="taxonomic scope" value="Eukaryota"/>
</dbReference>
<dbReference type="HOGENOM" id="CLU_034402_2_0_1"/>
<dbReference type="InParanoid" id="Q75A37"/>
<dbReference type="OMA" id="SGVIMEM"/>
<dbReference type="OrthoDB" id="360540at2759"/>
<dbReference type="Proteomes" id="UP000000591">
    <property type="component" value="Chromosome IV"/>
</dbReference>
<dbReference type="GO" id="GO:0005737">
    <property type="term" value="C:cytoplasm"/>
    <property type="evidence" value="ECO:0000318"/>
    <property type="project" value="GO_Central"/>
</dbReference>
<dbReference type="GO" id="GO:0051301">
    <property type="term" value="P:cell division"/>
    <property type="evidence" value="ECO:0007669"/>
    <property type="project" value="UniProtKB-KW"/>
</dbReference>
<dbReference type="InterPro" id="IPR009772">
    <property type="entry name" value="CDC123"/>
</dbReference>
<dbReference type="PANTHER" id="PTHR15323:SF6">
    <property type="entry name" value="CELL DIVISION CYCLE PROTEIN 123 HOMOLOG"/>
    <property type="match status" value="1"/>
</dbReference>
<dbReference type="PANTHER" id="PTHR15323">
    <property type="entry name" value="D123 PROTEIN"/>
    <property type="match status" value="1"/>
</dbReference>
<dbReference type="Pfam" id="PF07065">
    <property type="entry name" value="D123"/>
    <property type="match status" value="1"/>
</dbReference>
<dbReference type="PIRSF" id="PIRSF007807">
    <property type="entry name" value="Cdc123"/>
    <property type="match status" value="1"/>
</dbReference>
<keyword id="KW-0131">Cell cycle</keyword>
<keyword id="KW-0132">Cell division</keyword>
<keyword id="KW-0963">Cytoplasm</keyword>
<keyword id="KW-1185">Reference proteome</keyword>